<organism>
    <name type="scientific">Corynebacterium glutamicum (strain R)</name>
    <dbReference type="NCBI Taxonomy" id="340322"/>
    <lineage>
        <taxon>Bacteria</taxon>
        <taxon>Bacillati</taxon>
        <taxon>Actinomycetota</taxon>
        <taxon>Actinomycetes</taxon>
        <taxon>Mycobacteriales</taxon>
        <taxon>Corynebacteriaceae</taxon>
        <taxon>Corynebacterium</taxon>
    </lineage>
</organism>
<accession>A4QHN8</accession>
<name>DCDB_CORGB</name>
<proteinExistence type="inferred from homology"/>
<reference key="1">
    <citation type="journal article" date="2007" name="Microbiology">
        <title>Comparative analysis of the Corynebacterium glutamicum group and complete genome sequence of strain R.</title>
        <authorList>
            <person name="Yukawa H."/>
            <person name="Omumasaba C.A."/>
            <person name="Nonaka H."/>
            <person name="Kos P."/>
            <person name="Okai N."/>
            <person name="Suzuki N."/>
            <person name="Suda M."/>
            <person name="Tsuge Y."/>
            <person name="Watanabe J."/>
            <person name="Ikeda Y."/>
            <person name="Vertes A.A."/>
            <person name="Inui M."/>
        </authorList>
    </citation>
    <scope>NUCLEOTIDE SEQUENCE [LARGE SCALE GENOMIC DNA]</scope>
    <source>
        <strain>R</strain>
    </source>
</reference>
<dbReference type="EC" id="3.5.4.30" evidence="1"/>
<dbReference type="EMBL" id="AP009044">
    <property type="protein sequence ID" value="BAF55754.1"/>
    <property type="molecule type" value="Genomic_DNA"/>
</dbReference>
<dbReference type="RefSeq" id="WP_003853460.1">
    <property type="nucleotide sequence ID" value="NC_009342.1"/>
</dbReference>
<dbReference type="SMR" id="A4QHN8"/>
<dbReference type="GeneID" id="1020792"/>
<dbReference type="KEGG" id="cgt:cgR_2737"/>
<dbReference type="HOGENOM" id="CLU_087476_2_1_11"/>
<dbReference type="PhylomeDB" id="A4QHN8"/>
<dbReference type="UniPathway" id="UPA00610">
    <property type="reaction ID" value="UER00667"/>
</dbReference>
<dbReference type="Proteomes" id="UP000006698">
    <property type="component" value="Chromosome"/>
</dbReference>
<dbReference type="GO" id="GO:0033973">
    <property type="term" value="F:dCTP deaminase (dUMP-forming) activity"/>
    <property type="evidence" value="ECO:0007669"/>
    <property type="project" value="UniProtKB-UniRule"/>
</dbReference>
<dbReference type="GO" id="GO:0008829">
    <property type="term" value="F:dCTP deaminase activity"/>
    <property type="evidence" value="ECO:0007669"/>
    <property type="project" value="InterPro"/>
</dbReference>
<dbReference type="GO" id="GO:0000166">
    <property type="term" value="F:nucleotide binding"/>
    <property type="evidence" value="ECO:0007669"/>
    <property type="project" value="UniProtKB-KW"/>
</dbReference>
<dbReference type="GO" id="GO:0006226">
    <property type="term" value="P:dUMP biosynthetic process"/>
    <property type="evidence" value="ECO:0007669"/>
    <property type="project" value="UniProtKB-UniRule"/>
</dbReference>
<dbReference type="GO" id="GO:0006229">
    <property type="term" value="P:dUTP biosynthetic process"/>
    <property type="evidence" value="ECO:0007669"/>
    <property type="project" value="InterPro"/>
</dbReference>
<dbReference type="GO" id="GO:0015949">
    <property type="term" value="P:nucleobase-containing small molecule interconversion"/>
    <property type="evidence" value="ECO:0007669"/>
    <property type="project" value="TreeGrafter"/>
</dbReference>
<dbReference type="CDD" id="cd07557">
    <property type="entry name" value="trimeric_dUTPase"/>
    <property type="match status" value="1"/>
</dbReference>
<dbReference type="FunFam" id="2.70.40.10:FF:000005">
    <property type="entry name" value="dCTP deaminase, dUMP-forming"/>
    <property type="match status" value="1"/>
</dbReference>
<dbReference type="Gene3D" id="2.70.40.10">
    <property type="match status" value="1"/>
</dbReference>
<dbReference type="HAMAP" id="MF_00146">
    <property type="entry name" value="dCTP_deaminase"/>
    <property type="match status" value="1"/>
</dbReference>
<dbReference type="InterPro" id="IPR011962">
    <property type="entry name" value="dCTP_deaminase"/>
</dbReference>
<dbReference type="InterPro" id="IPR036157">
    <property type="entry name" value="dUTPase-like_sf"/>
</dbReference>
<dbReference type="InterPro" id="IPR033704">
    <property type="entry name" value="dUTPase_trimeric"/>
</dbReference>
<dbReference type="NCBIfam" id="TIGR02274">
    <property type="entry name" value="dCTP_deam"/>
    <property type="match status" value="1"/>
</dbReference>
<dbReference type="PANTHER" id="PTHR42680">
    <property type="entry name" value="DCTP DEAMINASE"/>
    <property type="match status" value="1"/>
</dbReference>
<dbReference type="PANTHER" id="PTHR42680:SF3">
    <property type="entry name" value="DCTP DEAMINASE"/>
    <property type="match status" value="1"/>
</dbReference>
<dbReference type="Pfam" id="PF22769">
    <property type="entry name" value="DCD"/>
    <property type="match status" value="1"/>
</dbReference>
<dbReference type="SUPFAM" id="SSF51283">
    <property type="entry name" value="dUTPase-like"/>
    <property type="match status" value="1"/>
</dbReference>
<protein>
    <recommendedName>
        <fullName evidence="1">dCTP deaminase, dUMP-forming</fullName>
        <ecNumber evidence="1">3.5.4.30</ecNumber>
    </recommendedName>
    <alternativeName>
        <fullName evidence="1">Bifunctional dCTP deaminase:dUTPase</fullName>
    </alternativeName>
    <alternativeName>
        <fullName evidence="1">DCD-DUT</fullName>
    </alternativeName>
</protein>
<evidence type="ECO:0000255" key="1">
    <source>
        <dbReference type="HAMAP-Rule" id="MF_00146"/>
    </source>
</evidence>
<evidence type="ECO:0000256" key="2">
    <source>
        <dbReference type="SAM" id="MobiDB-lite"/>
    </source>
</evidence>
<feature type="chain" id="PRO_1000009712" description="dCTP deaminase, dUMP-forming">
    <location>
        <begin position="1"/>
        <end position="189"/>
    </location>
</feature>
<feature type="region of interest" description="Disordered" evidence="2">
    <location>
        <begin position="163"/>
        <end position="189"/>
    </location>
</feature>
<feature type="active site" description="Proton donor/acceptor" evidence="1">
    <location>
        <position position="129"/>
    </location>
</feature>
<feature type="binding site" evidence="1">
    <location>
        <begin position="101"/>
        <end position="106"/>
    </location>
    <ligand>
        <name>dCTP</name>
        <dbReference type="ChEBI" id="CHEBI:61481"/>
    </ligand>
</feature>
<feature type="binding site" evidence="1">
    <location>
        <position position="119"/>
    </location>
    <ligand>
        <name>dCTP</name>
        <dbReference type="ChEBI" id="CHEBI:61481"/>
    </ligand>
</feature>
<feature type="binding site" evidence="1">
    <location>
        <begin position="127"/>
        <end position="129"/>
    </location>
    <ligand>
        <name>dCTP</name>
        <dbReference type="ChEBI" id="CHEBI:61481"/>
    </ligand>
</feature>
<feature type="binding site" evidence="1">
    <location>
        <position position="148"/>
    </location>
    <ligand>
        <name>dCTP</name>
        <dbReference type="ChEBI" id="CHEBI:61481"/>
    </ligand>
</feature>
<feature type="binding site" evidence="1">
    <location>
        <position position="162"/>
    </location>
    <ligand>
        <name>dCTP</name>
        <dbReference type="ChEBI" id="CHEBI:61481"/>
    </ligand>
</feature>
<feature type="binding site" evidence="1">
    <location>
        <position position="170"/>
    </location>
    <ligand>
        <name>dCTP</name>
        <dbReference type="ChEBI" id="CHEBI:61481"/>
    </ligand>
</feature>
<feature type="binding site" evidence="1">
    <location>
        <position position="174"/>
    </location>
    <ligand>
        <name>dCTP</name>
        <dbReference type="ChEBI" id="CHEBI:61481"/>
    </ligand>
</feature>
<feature type="site" description="Important for bifunctional activity" evidence="1">
    <location>
        <begin position="116"/>
        <end position="117"/>
    </location>
</feature>
<keyword id="KW-0378">Hydrolase</keyword>
<keyword id="KW-0546">Nucleotide metabolism</keyword>
<keyword id="KW-0547">Nucleotide-binding</keyword>
<gene>
    <name evidence="1" type="primary">dcd</name>
    <name type="ordered locus">cgR_2737</name>
</gene>
<comment type="function">
    <text evidence="1">Bifunctional enzyme that catalyzes both the deamination of dCTP to dUTP and the hydrolysis of dUTP to dUMP without releasing the toxic dUTP intermediate.</text>
</comment>
<comment type="catalytic activity">
    <reaction evidence="1">
        <text>dCTP + 2 H2O = dUMP + NH4(+) + diphosphate</text>
        <dbReference type="Rhea" id="RHEA:19205"/>
        <dbReference type="ChEBI" id="CHEBI:15377"/>
        <dbReference type="ChEBI" id="CHEBI:28938"/>
        <dbReference type="ChEBI" id="CHEBI:33019"/>
        <dbReference type="ChEBI" id="CHEBI:61481"/>
        <dbReference type="ChEBI" id="CHEBI:246422"/>
        <dbReference type="EC" id="3.5.4.30"/>
    </reaction>
</comment>
<comment type="pathway">
    <text evidence="1">Pyrimidine metabolism; dUMP biosynthesis; dUMP from dCTP: step 1/1.</text>
</comment>
<comment type="subunit">
    <text evidence="1">Homotrimer.</text>
</comment>
<comment type="similarity">
    <text evidence="1">Belongs to the dCTP deaminase family.</text>
</comment>
<sequence length="189" mass="20689">MLLSDRDIRKSIDAGDLGIEPFDAELIQPSSVDVRMDRYFRVFNNSKYTHIDPKLNQDELTSLVEVEDGEGFVLHPGEFVLASTLEKFTLPAHLAGRLEGKSSLGRLGLLTHSTAGFIDPGFSGYITLELSNVANLPITLWPGMKVGQLALFQMSSPAETPYGSGKLGSKYQGQRGPTPSKAYLNFPNK</sequence>